<proteinExistence type="inferred from homology"/>
<reference key="1">
    <citation type="journal article" date="2007" name="J. Bacteriol.">
        <title>The complete genome sequence of Bacillus thuringiensis Al Hakam.</title>
        <authorList>
            <person name="Challacombe J.F."/>
            <person name="Altherr M.R."/>
            <person name="Xie G."/>
            <person name="Bhotika S.S."/>
            <person name="Brown N."/>
            <person name="Bruce D."/>
            <person name="Campbell C.S."/>
            <person name="Campbell M.L."/>
            <person name="Chen J."/>
            <person name="Chertkov O."/>
            <person name="Cleland C."/>
            <person name="Dimitrijevic M."/>
            <person name="Doggett N.A."/>
            <person name="Fawcett J.J."/>
            <person name="Glavina T."/>
            <person name="Goodwin L.A."/>
            <person name="Green L.D."/>
            <person name="Han C.S."/>
            <person name="Hill K.K."/>
            <person name="Hitchcock P."/>
            <person name="Jackson P.J."/>
            <person name="Keim P."/>
            <person name="Kewalramani A.R."/>
            <person name="Longmire J."/>
            <person name="Lucas S."/>
            <person name="Malfatti S."/>
            <person name="Martinez D."/>
            <person name="McMurry K."/>
            <person name="Meincke L.J."/>
            <person name="Misra M."/>
            <person name="Moseman B.L."/>
            <person name="Mundt M."/>
            <person name="Munk A.C."/>
            <person name="Okinaka R.T."/>
            <person name="Parson-Quintana B."/>
            <person name="Reilly L.P."/>
            <person name="Richardson P."/>
            <person name="Robinson D.L."/>
            <person name="Saunders E."/>
            <person name="Tapia R."/>
            <person name="Tesmer J.G."/>
            <person name="Thayer N."/>
            <person name="Thompson L.S."/>
            <person name="Tice H."/>
            <person name="Ticknor L.O."/>
            <person name="Wills P.L."/>
            <person name="Gilna P."/>
            <person name="Brettin T.S."/>
        </authorList>
    </citation>
    <scope>NUCLEOTIDE SEQUENCE [LARGE SCALE GENOMIC DNA]</scope>
    <source>
        <strain>Al Hakam</strain>
    </source>
</reference>
<gene>
    <name type="primary">czcR</name>
    <name type="ordered locus">BALH_0205</name>
</gene>
<organism>
    <name type="scientific">Bacillus thuringiensis (strain Al Hakam)</name>
    <dbReference type="NCBI Taxonomy" id="412694"/>
    <lineage>
        <taxon>Bacteria</taxon>
        <taxon>Bacillati</taxon>
        <taxon>Bacillota</taxon>
        <taxon>Bacilli</taxon>
        <taxon>Bacillales</taxon>
        <taxon>Bacillaceae</taxon>
        <taxon>Bacillus</taxon>
        <taxon>Bacillus cereus group</taxon>
    </lineage>
</organism>
<dbReference type="EMBL" id="CP000485">
    <property type="protein sequence ID" value="ABK83613.1"/>
    <property type="molecule type" value="Genomic_DNA"/>
</dbReference>
<dbReference type="SMR" id="A0R8S0"/>
<dbReference type="KEGG" id="btl:BALH_0205"/>
<dbReference type="HOGENOM" id="CLU_039613_6_1_9"/>
<dbReference type="GO" id="GO:0003700">
    <property type="term" value="F:DNA-binding transcription factor activity"/>
    <property type="evidence" value="ECO:0007669"/>
    <property type="project" value="InterPro"/>
</dbReference>
<dbReference type="GO" id="GO:0000976">
    <property type="term" value="F:transcription cis-regulatory region binding"/>
    <property type="evidence" value="ECO:0007669"/>
    <property type="project" value="TreeGrafter"/>
</dbReference>
<dbReference type="CDD" id="cd08442">
    <property type="entry name" value="PBP2_YofA_SoxR_like"/>
    <property type="match status" value="1"/>
</dbReference>
<dbReference type="FunFam" id="1.10.10.10:FF:000001">
    <property type="entry name" value="LysR family transcriptional regulator"/>
    <property type="match status" value="1"/>
</dbReference>
<dbReference type="Gene3D" id="3.40.190.290">
    <property type="match status" value="1"/>
</dbReference>
<dbReference type="Gene3D" id="1.10.10.10">
    <property type="entry name" value="Winged helix-like DNA-binding domain superfamily/Winged helix DNA-binding domain"/>
    <property type="match status" value="1"/>
</dbReference>
<dbReference type="InterPro" id="IPR005119">
    <property type="entry name" value="LysR_subst-bd"/>
</dbReference>
<dbReference type="InterPro" id="IPR000847">
    <property type="entry name" value="Tscrpt_reg_HTH_LysR"/>
</dbReference>
<dbReference type="InterPro" id="IPR036388">
    <property type="entry name" value="WH-like_DNA-bd_sf"/>
</dbReference>
<dbReference type="InterPro" id="IPR036390">
    <property type="entry name" value="WH_DNA-bd_sf"/>
</dbReference>
<dbReference type="PANTHER" id="PTHR30126">
    <property type="entry name" value="HTH-TYPE TRANSCRIPTIONAL REGULATOR"/>
    <property type="match status" value="1"/>
</dbReference>
<dbReference type="PANTHER" id="PTHR30126:SF40">
    <property type="entry name" value="HTH-TYPE TRANSCRIPTIONAL REGULATOR GLTR"/>
    <property type="match status" value="1"/>
</dbReference>
<dbReference type="Pfam" id="PF00126">
    <property type="entry name" value="HTH_1"/>
    <property type="match status" value="1"/>
</dbReference>
<dbReference type="Pfam" id="PF03466">
    <property type="entry name" value="LysR_substrate"/>
    <property type="match status" value="1"/>
</dbReference>
<dbReference type="SUPFAM" id="SSF53850">
    <property type="entry name" value="Periplasmic binding protein-like II"/>
    <property type="match status" value="1"/>
</dbReference>
<dbReference type="SUPFAM" id="SSF46785">
    <property type="entry name" value="Winged helix' DNA-binding domain"/>
    <property type="match status" value="1"/>
</dbReference>
<dbReference type="PROSITE" id="PS50931">
    <property type="entry name" value="HTH_LYSR"/>
    <property type="match status" value="1"/>
</dbReference>
<feature type="chain" id="PRO_0000334143" description="HTH-type transcriptional regulator CzcR">
    <location>
        <begin position="1"/>
        <end position="298"/>
    </location>
</feature>
<feature type="domain" description="HTH lysR-type" evidence="1">
    <location>
        <begin position="11"/>
        <end position="68"/>
    </location>
</feature>
<feature type="DNA-binding region" description="H-T-H motif" evidence="1">
    <location>
        <begin position="28"/>
        <end position="47"/>
    </location>
</feature>
<name>CZCR_BACAH</name>
<accession>A0R8S0</accession>
<protein>
    <recommendedName>
        <fullName>HTH-type transcriptional regulator CzcR</fullName>
    </recommendedName>
</protein>
<keyword id="KW-0238">DNA-binding</keyword>
<keyword id="KW-0804">Transcription</keyword>
<keyword id="KW-0805">Transcription regulation</keyword>
<sequence length="298" mass="33841">MIVNIKEDSIMELRDLQIFQSVADQGSVSSAAKELNYVQSNVTARIKQLENELKTPLFYRHKRGMTLTAEGRKMLVYVHKILQDVDELKQVFLDSETPSGILKIGTVETVSTLPTILSSYYKSYPNVDLSLQAGLTEELIREVLDHQLDGAFISGPIKHPLIEQYDVSTEKLMLVTQNKAFHIEEFTTTPLLVFNQGCGYRSKLERWLKDEGLLPKRIMEFNILETILNSVALGLGITLVPQSAVHHLSKAGKVHCHAIPEKYGSISTVFIRRKDSYMTNSMRSFLKTIEEHHHINML</sequence>
<evidence type="ECO:0000255" key="1">
    <source>
        <dbReference type="PROSITE-ProRule" id="PRU00253"/>
    </source>
</evidence>
<evidence type="ECO:0000305" key="2"/>
<comment type="similarity">
    <text evidence="2">Belongs to the LysR transcriptional regulatory family.</text>
</comment>